<accession>P24761</accession>
<accession>Q76ZP2</accession>
<evidence type="ECO:0000250" key="1"/>
<evidence type="ECO:0000255" key="2"/>
<evidence type="ECO:0000269" key="3">
    <source>
    </source>
</evidence>
<evidence type="ECO:0000269" key="4">
    <source>
    </source>
</evidence>
<evidence type="ECO:0000269" key="5">
    <source>
    </source>
</evidence>
<evidence type="ECO:0000269" key="6">
    <source>
    </source>
</evidence>
<evidence type="ECO:0000269" key="7">
    <source>
    </source>
</evidence>
<evidence type="ECO:0000305" key="8"/>
<organism>
    <name type="scientific">Vaccinia virus (strain Western Reserve)</name>
    <name type="common">VACV</name>
    <name type="synonym">Vaccinia virus (strain WR)</name>
    <dbReference type="NCBI Taxonomy" id="10254"/>
    <lineage>
        <taxon>Viruses</taxon>
        <taxon>Varidnaviria</taxon>
        <taxon>Bamfordvirae</taxon>
        <taxon>Nucleocytoviricota</taxon>
        <taxon>Pokkesviricetes</taxon>
        <taxon>Chitovirales</taxon>
        <taxon>Poxviridae</taxon>
        <taxon>Chordopoxvirinae</taxon>
        <taxon>Orthopoxvirus</taxon>
        <taxon>Vaccinia virus</taxon>
    </lineage>
</organism>
<keyword id="KW-1015">Disulfide bond</keyword>
<keyword id="KW-0325">Glycoprotein</keyword>
<keyword id="KW-1040">Host Golgi apparatus</keyword>
<keyword id="KW-0472">Membrane</keyword>
<keyword id="KW-1185">Reference proteome</keyword>
<keyword id="KW-0735">Signal-anchor</keyword>
<keyword id="KW-0812">Transmembrane</keyword>
<keyword id="KW-1133">Transmembrane helix</keyword>
<keyword id="KW-0946">Virion</keyword>
<gene>
    <name type="primary">OPG162</name>
    <name type="ordered locus">VACWR157</name>
    <name type="ORF">A34R</name>
    <name type="ORF">SALL4R</name>
</gene>
<organismHost>
    <name type="scientific">Bos taurus</name>
    <name type="common">Bovine</name>
    <dbReference type="NCBI Taxonomy" id="9913"/>
</organismHost>
<sequence length="168" mass="19555">MKSLNRQTVSRFKKLSVPAAIMMILSTIISGIGTFLHYKEELMPSACANGWIQYDKHCYLDTNIKMSTDNAVYQCRKLRARLPRPDTRHLRVLFSIFYKDYWVSLKKTNDKWLDINNDKDIDISKLTNFKQLNSTTDAEACYIYKSGKLVKTVCKSTQSVLCVKKFYK</sequence>
<name>PG162_VACCW</name>
<protein>
    <recommendedName>
        <fullName>Protein OPG162</fullName>
    </recommendedName>
</protein>
<proteinExistence type="evidence at protein level"/>
<dbReference type="EMBL" id="D11079">
    <property type="protein sequence ID" value="BAA01806.1"/>
    <property type="molecule type" value="Genomic_DNA"/>
</dbReference>
<dbReference type="EMBL" id="M61187">
    <property type="protein sequence ID" value="AAA48331.1"/>
    <property type="molecule type" value="Genomic_DNA"/>
</dbReference>
<dbReference type="EMBL" id="AY243312">
    <property type="protein sequence ID" value="AAO89436.1"/>
    <property type="molecule type" value="Genomic_DNA"/>
</dbReference>
<dbReference type="PIR" id="JQ1770">
    <property type="entry name" value="JQ1770"/>
</dbReference>
<dbReference type="RefSeq" id="YP_233039.1">
    <property type="nucleotide sequence ID" value="NC_006998.1"/>
</dbReference>
<dbReference type="SMR" id="P24761"/>
<dbReference type="IntAct" id="P24761">
    <property type="interactions" value="4"/>
</dbReference>
<dbReference type="MINT" id="P24761"/>
<dbReference type="DNASU" id="3707687"/>
<dbReference type="GeneID" id="3707687"/>
<dbReference type="KEGG" id="vg:3707687"/>
<dbReference type="Proteomes" id="UP000000344">
    <property type="component" value="Genome"/>
</dbReference>
<dbReference type="GO" id="GO:0044177">
    <property type="term" value="C:host cell Golgi apparatus"/>
    <property type="evidence" value="ECO:0007669"/>
    <property type="project" value="UniProtKB-SubCell"/>
</dbReference>
<dbReference type="GO" id="GO:0016020">
    <property type="term" value="C:membrane"/>
    <property type="evidence" value="ECO:0007669"/>
    <property type="project" value="UniProtKB-KW"/>
</dbReference>
<dbReference type="GO" id="GO:0055036">
    <property type="term" value="C:virion membrane"/>
    <property type="evidence" value="ECO:0007669"/>
    <property type="project" value="UniProtKB-SubCell"/>
</dbReference>
<dbReference type="Gene3D" id="3.10.100.10">
    <property type="entry name" value="Mannose-Binding Protein A, subunit A"/>
    <property type="match status" value="1"/>
</dbReference>
<dbReference type="InterPro" id="IPR001304">
    <property type="entry name" value="C-type_lectin-like"/>
</dbReference>
<dbReference type="InterPro" id="IPR016186">
    <property type="entry name" value="C-type_lectin-like/link_sf"/>
</dbReference>
<dbReference type="InterPro" id="IPR016187">
    <property type="entry name" value="CTDL_fold"/>
</dbReference>
<dbReference type="Pfam" id="PF00059">
    <property type="entry name" value="Lectin_C"/>
    <property type="match status" value="1"/>
</dbReference>
<dbReference type="SUPFAM" id="SSF56436">
    <property type="entry name" value="C-type lectin-like"/>
    <property type="match status" value="1"/>
</dbReference>
<feature type="chain" id="PRO_0000099320" description="Protein OPG162">
    <location>
        <begin position="1"/>
        <end position="168"/>
    </location>
</feature>
<feature type="topological domain" description="Intravirion" evidence="2">
    <location>
        <begin position="1"/>
        <end position="14"/>
    </location>
</feature>
<feature type="transmembrane region" description="Helical" evidence="2">
    <location>
        <begin position="15"/>
        <end position="37"/>
    </location>
</feature>
<feature type="topological domain" description="Virion surface" evidence="2">
    <location>
        <begin position="38"/>
        <end position="168"/>
    </location>
</feature>
<feature type="domain" description="C-type lectin">
    <location>
        <begin position="54"/>
        <end position="163"/>
    </location>
</feature>
<feature type="glycosylation site" description="N-linked (GlcNAc...) asparagine; by host" evidence="2">
    <location>
        <position position="133"/>
    </location>
</feature>
<feature type="disulfide bond" evidence="1">
    <location>
        <begin position="75"/>
        <end position="162"/>
    </location>
</feature>
<feature type="disulfide bond" evidence="1">
    <location>
        <begin position="141"/>
        <end position="154"/>
    </location>
</feature>
<reference key="1">
    <citation type="journal article" date="1991" name="J. Gen. Virol.">
        <title>Nucleotide sequence of 42 kbp of vaccinia virus strain WR from near the right inverted terminal repeat.</title>
        <authorList>
            <person name="Smith G.L."/>
            <person name="Chan Y.S."/>
            <person name="Howard S.T."/>
        </authorList>
    </citation>
    <scope>NUCLEOTIDE SEQUENCE [GENOMIC DNA]</scope>
</reference>
<reference key="2">
    <citation type="journal article" date="1991" name="J. Biol. Chem.">
        <title>Identification, sequence, and expression of the gene encoding a Mr 35,000 subunit of the vaccinia virus DNA-dependent RNA polymerase.</title>
        <authorList>
            <person name="Amegadzie B.Y."/>
            <person name="Ahn B.-Y."/>
            <person name="Moss B."/>
        </authorList>
    </citation>
    <scope>NUCLEOTIDE SEQUENCE [GENOMIC DNA]</scope>
</reference>
<reference key="3">
    <citation type="submission" date="2003-02" db="EMBL/GenBank/DDBJ databases">
        <title>Sequencing of the coding region of Vaccinia-WR to an average 9-fold redundancy and an error rate of 0.16/10kb.</title>
        <authorList>
            <person name="Esposito J.J."/>
            <person name="Frace A.M."/>
            <person name="Sammons S.A."/>
            <person name="Olsen-Rasmussen M."/>
            <person name="Osborne J."/>
            <person name="Wohlhueter R."/>
        </authorList>
    </citation>
    <scope>NUCLEOTIDE SEQUENCE [LARGE SCALE GENOMIC DNA]</scope>
</reference>
<reference key="4">
    <citation type="journal article" date="1992" name="J. Virol.">
        <title>Identification and characterization of an extracellular envelope glycoprotein affecting vaccinia virus egress.</title>
        <authorList>
            <person name="Duncan S.A."/>
            <person name="Smith G.L."/>
        </authorList>
    </citation>
    <scope>SUBCELLULAR LOCATION</scope>
</reference>
<reference key="5">
    <citation type="journal article" date="1999" name="J. Virol.">
        <title>Interactions between vaccinia virus IEV membrane proteins and their roles in IEV assembly and actin tail formation.</title>
        <authorList>
            <person name="Rottger S."/>
            <person name="Frischknecht F."/>
            <person name="Reckmann I."/>
            <person name="Smith G.L."/>
            <person name="Way M."/>
        </authorList>
    </citation>
    <scope>INTERACTION WITH PROTEINS OPG164 AND OPG190</scope>
</reference>
<reference key="6">
    <citation type="journal article" date="2006" name="Virol. J.">
        <title>Pox proteomics: mass spectrometry analysis and identification of Vaccinia virion proteins.</title>
        <authorList>
            <person name="Yoder J.D."/>
            <person name="Chen T.S."/>
            <person name="Gagnier C.R."/>
            <person name="Vemulapalli S."/>
            <person name="Maier C.S."/>
            <person name="Hruby D.E."/>
        </authorList>
    </citation>
    <scope>IDENTIFICATION BY MASS SPECTROMETRY</scope>
</reference>
<reference key="7">
    <citation type="journal article" date="2008" name="J. Virol.">
        <title>Vaccinia virus A34 glycoprotein determines the protein composition of the extracellular virus envelope.</title>
        <authorList>
            <person name="Perdiguero B."/>
            <person name="Lorenzo M.M."/>
            <person name="Blasco R."/>
        </authorList>
    </citation>
    <scope>FUNCTION</scope>
</reference>
<reference key="8">
    <citation type="journal article" date="2013" name="J. Gen. Virol.">
        <title>Transport and stability of the vaccinia virus A34 protein is affected by the A33 protein.</title>
        <authorList>
            <person name="Breiman A."/>
            <person name="Carpentier D.C.J."/>
            <person name="Ewles H.A."/>
            <person name="Smith G.L."/>
        </authorList>
    </citation>
    <scope>FUNCTION</scope>
    <scope>INTERACTION WITH OPG190</scope>
    <scope>SUBCELLULAR LOCATION</scope>
</reference>
<reference key="9">
    <citation type="journal article" date="2020" name="J. Virol.">
        <title>Vaccinia Virus Glycoproteins A33, A34, and B5 Form a Complex for Efficient Endoplasmic Reticulum to trans-Golgi Network Transport.</title>
        <authorList>
            <person name="Monticelli S.R."/>
            <person name="Earley A.K."/>
            <person name="Stone R."/>
            <person name="Norbury C.C."/>
            <person name="Ward B.M."/>
        </authorList>
    </citation>
    <scope>FUNCTION</scope>
    <scope>INTERACTION WITH OPG161 AND OPG190</scope>
</reference>
<comment type="function">
    <text evidence="5 6 7">Forms a complex with OPG162 and OPG190 to coordinate the incorporation of OPG164 into wrapped enveloped virion (EV) membranes and, subsequently, the production of actin tails (PubMed:23255618, PubMed:31941777). Therefore plays an essential role in efficient cell-to-cell spread of viral particles.</text>
</comment>
<comment type="subunit">
    <text evidence="3 6 7">Interacts with protein OPG161 (PubMed:31941777). Interacts with protein OPG164 (PubMed:10074134). Interacts with protein OPG190 (PubMed:10074134, PubMed:23255618, PubMed:31941777).</text>
</comment>
<comment type="subcellular location">
    <subcellularLocation>
        <location evidence="6">Virion membrane</location>
        <topology evidence="8">Single-pass type II membrane protein</topology>
    </subcellularLocation>
    <subcellularLocation>
        <location evidence="6">Host Golgi apparatus</location>
    </subcellularLocation>
    <text evidence="4">Present in the enveloped virion (EV) membrane.</text>
</comment>
<comment type="similarity">
    <text evidence="8">Belongs to the orthopoxvirus OPG162 protein family.</text>
</comment>